<comment type="function">
    <text evidence="1">Cleaves proteins, imported into the mitochondrion, to their mature size. While most mitochondrial precursor proteins are processed to the mature form in one step by mitochondrial processing peptidase (MPP), the sequential cleavage by MIP of an octapeptide after initial processing by MPP is a required step for a subgroup of nuclear-encoded precursor proteins destined for the matrix or the inner membrane (By similarity).</text>
</comment>
<comment type="catalytic activity">
    <reaction>
        <text>Release of an N-terminal octapeptide as second stage of processing of some proteins imported into the mitochondrion.</text>
        <dbReference type="EC" id="3.4.24.59"/>
    </reaction>
</comment>
<comment type="cofactor">
    <cofactor evidence="1">
        <name>Zn(2+)</name>
        <dbReference type="ChEBI" id="CHEBI:29105"/>
    </cofactor>
    <text evidence="1">Binds 1 zinc ion.</text>
</comment>
<comment type="subcellular location">
    <subcellularLocation>
        <location evidence="1">Mitochondrion matrix</location>
    </subcellularLocation>
</comment>
<comment type="similarity">
    <text evidence="5">Belongs to the peptidase M3 family.</text>
</comment>
<accession>A4RF25</accession>
<accession>G4NBT3</accession>
<gene>
    <name type="primary">OCT1</name>
    <name type="ORF">MGG_00487</name>
</gene>
<evidence type="ECO:0000250" key="1"/>
<evidence type="ECO:0000255" key="2"/>
<evidence type="ECO:0000255" key="3">
    <source>
        <dbReference type="PROSITE-ProRule" id="PRU10095"/>
    </source>
</evidence>
<evidence type="ECO:0000256" key="4">
    <source>
        <dbReference type="SAM" id="MobiDB-lite"/>
    </source>
</evidence>
<evidence type="ECO:0000305" key="5"/>
<organism>
    <name type="scientific">Pyricularia oryzae (strain 70-15 / ATCC MYA-4617 / FGSC 8958)</name>
    <name type="common">Rice blast fungus</name>
    <name type="synonym">Magnaporthe oryzae</name>
    <dbReference type="NCBI Taxonomy" id="242507"/>
    <lineage>
        <taxon>Eukaryota</taxon>
        <taxon>Fungi</taxon>
        <taxon>Dikarya</taxon>
        <taxon>Ascomycota</taxon>
        <taxon>Pezizomycotina</taxon>
        <taxon>Sordariomycetes</taxon>
        <taxon>Sordariomycetidae</taxon>
        <taxon>Magnaporthales</taxon>
        <taxon>Pyriculariaceae</taxon>
        <taxon>Pyricularia</taxon>
    </lineage>
</organism>
<name>PMIP_PYRO7</name>
<feature type="transit peptide" description="Mitochondrion" evidence="2">
    <location>
        <begin position="1"/>
        <end position="35"/>
    </location>
</feature>
<feature type="chain" id="PRO_0000338587" description="Mitochondrial intermediate peptidase">
    <location>
        <begin position="36"/>
        <end position="812"/>
    </location>
</feature>
<feature type="region of interest" description="Disordered" evidence="4">
    <location>
        <begin position="518"/>
        <end position="544"/>
    </location>
</feature>
<feature type="active site" evidence="3">
    <location>
        <position position="588"/>
    </location>
</feature>
<feature type="binding site" evidence="3">
    <location>
        <position position="587"/>
    </location>
    <ligand>
        <name>Zn(2+)</name>
        <dbReference type="ChEBI" id="CHEBI:29105"/>
        <note>catalytic</note>
    </ligand>
</feature>
<feature type="binding site" evidence="3">
    <location>
        <position position="591"/>
    </location>
    <ligand>
        <name>Zn(2+)</name>
        <dbReference type="ChEBI" id="CHEBI:29105"/>
        <note>catalytic</note>
    </ligand>
</feature>
<feature type="binding site" evidence="3">
    <location>
        <position position="594"/>
    </location>
    <ligand>
        <name>Zn(2+)</name>
        <dbReference type="ChEBI" id="CHEBI:29105"/>
        <note>catalytic</note>
    </ligand>
</feature>
<sequence length="812" mass="90362">MLKLLRPRPWVCNSCLNRVAFPKPYPVGSRSTRWLSTAQSAAPAVSIPPVNPVPADHTTSGTHDDALLGKIFDCSSAWRDFSARSAKFPTENAGLFRNAYLTSPDGFLTFAQSSLSKASAIVNRVLGASTIEEYKTIVRDLDRLSDLLCRVIDLSDFVRVTHPDVRIQRAASEAWYMVYQYMNQLNTMTGLNDQLGKAMENSDVTKTWSEEEMAVAQLLKLDFMKSAVNLPQAARDRFVDLSQRISEIGSDFVNEMAPEQRRVVLPSSKFQGMDPQIARRFTKHGYMQLPTMSGEAAAALRTVHDEETRKAVYLAIRTASSRSVGLLEALLKHRAELADLAGFESYGHMTLRDRMMAKTPESINKFLVELSKNNAPRVLQEVDSLLQEKKTLLASPSATLNPWDREYYIQRIRNAQGKNVKHDNFFASYFSVGRVMQGLSRLFTRLYGIRFVPRETLPGEKWHPDVRRLDVVSDTDGHVAVLYCDLFYREDKSPNPAHFTIRCSRAISEDEISEAAVSTSEGGPAFGSPESAANDGMAASRGASGGPLKQLPTIALVCDFPQRDNPLSGSKSKPASLTFASLETLFHEMGHAIHSVLARTSFQNVAGTRCATDLAELPSTLMEYFASDPSVLSLFARHAETDEPLDYDLLAERVRSRGRFEGCDTDYQIILAMLDQAYHSPLASSESFDTTRAYHDLQREHSPLGPDPSSTRWQGFFGHLFGYGSTYYSYLFDQVLAERAWKKVFSSGQDGAALSREAGEHLKESLLKWGGSREPWRCVSDVLRDERIAGGGEEAMALVGSWGTSNKSTMKH</sequence>
<protein>
    <recommendedName>
        <fullName>Mitochondrial intermediate peptidase</fullName>
        <shortName>MIP</shortName>
        <ecNumber>3.4.24.59</ecNumber>
    </recommendedName>
    <alternativeName>
        <fullName>Octapeptidyl aminopeptidase</fullName>
    </alternativeName>
</protein>
<reference key="1">
    <citation type="journal article" date="2005" name="Nature">
        <title>The genome sequence of the rice blast fungus Magnaporthe grisea.</title>
        <authorList>
            <person name="Dean R.A."/>
            <person name="Talbot N.J."/>
            <person name="Ebbole D.J."/>
            <person name="Farman M.L."/>
            <person name="Mitchell T.K."/>
            <person name="Orbach M.J."/>
            <person name="Thon M.R."/>
            <person name="Kulkarni R."/>
            <person name="Xu J.-R."/>
            <person name="Pan H."/>
            <person name="Read N.D."/>
            <person name="Lee Y.-H."/>
            <person name="Carbone I."/>
            <person name="Brown D."/>
            <person name="Oh Y.Y."/>
            <person name="Donofrio N."/>
            <person name="Jeong J.S."/>
            <person name="Soanes D.M."/>
            <person name="Djonovic S."/>
            <person name="Kolomiets E."/>
            <person name="Rehmeyer C."/>
            <person name="Li W."/>
            <person name="Harding M."/>
            <person name="Kim S."/>
            <person name="Lebrun M.-H."/>
            <person name="Bohnert H."/>
            <person name="Coughlan S."/>
            <person name="Butler J."/>
            <person name="Calvo S.E."/>
            <person name="Ma L.-J."/>
            <person name="Nicol R."/>
            <person name="Purcell S."/>
            <person name="Nusbaum C."/>
            <person name="Galagan J.E."/>
            <person name="Birren B.W."/>
        </authorList>
    </citation>
    <scope>NUCLEOTIDE SEQUENCE [LARGE SCALE GENOMIC DNA]</scope>
    <source>
        <strain>70-15 / ATCC MYA-4617 / FGSC 8958</strain>
    </source>
</reference>
<keyword id="KW-0378">Hydrolase</keyword>
<keyword id="KW-0479">Metal-binding</keyword>
<keyword id="KW-0482">Metalloprotease</keyword>
<keyword id="KW-0496">Mitochondrion</keyword>
<keyword id="KW-0645">Protease</keyword>
<keyword id="KW-1185">Reference proteome</keyword>
<keyword id="KW-0809">Transit peptide</keyword>
<keyword id="KW-0862">Zinc</keyword>
<proteinExistence type="inferred from homology"/>
<dbReference type="EC" id="3.4.24.59"/>
<dbReference type="EMBL" id="CM001235">
    <property type="protein sequence ID" value="EHA48991.1"/>
    <property type="molecule type" value="Genomic_DNA"/>
</dbReference>
<dbReference type="RefSeq" id="XP_003718575.1">
    <property type="nucleotide sequence ID" value="XM_003718527.1"/>
</dbReference>
<dbReference type="SMR" id="A4RF25"/>
<dbReference type="FunCoup" id="A4RF25">
    <property type="interactions" value="653"/>
</dbReference>
<dbReference type="STRING" id="242507.A4RF25"/>
<dbReference type="EnsemblFungi" id="MGG_00487T0">
    <property type="protein sequence ID" value="MGG_00487T0"/>
    <property type="gene ID" value="MGG_00487"/>
</dbReference>
<dbReference type="GeneID" id="2674708"/>
<dbReference type="KEGG" id="mgr:MGG_00487"/>
<dbReference type="VEuPathDB" id="FungiDB:MGG_00487"/>
<dbReference type="eggNOG" id="KOG2090">
    <property type="taxonomic scope" value="Eukaryota"/>
</dbReference>
<dbReference type="HOGENOM" id="CLU_001805_0_0_1"/>
<dbReference type="InParanoid" id="A4RF25"/>
<dbReference type="OMA" id="ALMFEYM"/>
<dbReference type="OrthoDB" id="17530at2759"/>
<dbReference type="Proteomes" id="UP000009058">
    <property type="component" value="Chromosome 5"/>
</dbReference>
<dbReference type="GO" id="GO:0005759">
    <property type="term" value="C:mitochondrial matrix"/>
    <property type="evidence" value="ECO:0007669"/>
    <property type="project" value="UniProtKB-SubCell"/>
</dbReference>
<dbReference type="GO" id="GO:0046872">
    <property type="term" value="F:metal ion binding"/>
    <property type="evidence" value="ECO:0007669"/>
    <property type="project" value="UniProtKB-KW"/>
</dbReference>
<dbReference type="GO" id="GO:0004222">
    <property type="term" value="F:metalloendopeptidase activity"/>
    <property type="evidence" value="ECO:0007669"/>
    <property type="project" value="UniProtKB-EC"/>
</dbReference>
<dbReference type="GO" id="GO:0006518">
    <property type="term" value="P:peptide metabolic process"/>
    <property type="evidence" value="ECO:0007669"/>
    <property type="project" value="TreeGrafter"/>
</dbReference>
<dbReference type="GO" id="GO:0006627">
    <property type="term" value="P:protein processing involved in protein targeting to mitochondrion"/>
    <property type="evidence" value="ECO:0007669"/>
    <property type="project" value="TreeGrafter"/>
</dbReference>
<dbReference type="CDD" id="cd06457">
    <property type="entry name" value="M3A_MIP"/>
    <property type="match status" value="1"/>
</dbReference>
<dbReference type="Gene3D" id="3.40.390.10">
    <property type="entry name" value="Collagenase (Catalytic Domain)"/>
    <property type="match status" value="1"/>
</dbReference>
<dbReference type="Gene3D" id="1.10.1370.10">
    <property type="entry name" value="Neurolysin, domain 3"/>
    <property type="match status" value="1"/>
</dbReference>
<dbReference type="InterPro" id="IPR033851">
    <property type="entry name" value="M3A_MIP"/>
</dbReference>
<dbReference type="InterPro" id="IPR024079">
    <property type="entry name" value="MetalloPept_cat_dom_sf"/>
</dbReference>
<dbReference type="InterPro" id="IPR024077">
    <property type="entry name" value="Neurolysin/TOP_dom2"/>
</dbReference>
<dbReference type="InterPro" id="IPR045090">
    <property type="entry name" value="Pept_M3A_M3B"/>
</dbReference>
<dbReference type="InterPro" id="IPR001567">
    <property type="entry name" value="Pept_M3A_M3B_dom"/>
</dbReference>
<dbReference type="PANTHER" id="PTHR11804:SF79">
    <property type="entry name" value="MITOCHONDRIAL INTERMEDIATE PEPTIDASE"/>
    <property type="match status" value="1"/>
</dbReference>
<dbReference type="PANTHER" id="PTHR11804">
    <property type="entry name" value="PROTEASE M3 THIMET OLIGOPEPTIDASE-RELATED"/>
    <property type="match status" value="1"/>
</dbReference>
<dbReference type="Pfam" id="PF01432">
    <property type="entry name" value="Peptidase_M3"/>
    <property type="match status" value="1"/>
</dbReference>
<dbReference type="SUPFAM" id="SSF55486">
    <property type="entry name" value="Metalloproteases ('zincins'), catalytic domain"/>
    <property type="match status" value="1"/>
</dbReference>
<dbReference type="PROSITE" id="PS00142">
    <property type="entry name" value="ZINC_PROTEASE"/>
    <property type="match status" value="1"/>
</dbReference>